<organism>
    <name type="scientific">Helicobacter pylori (strain P12)</name>
    <dbReference type="NCBI Taxonomy" id="570508"/>
    <lineage>
        <taxon>Bacteria</taxon>
        <taxon>Pseudomonadati</taxon>
        <taxon>Campylobacterota</taxon>
        <taxon>Epsilonproteobacteria</taxon>
        <taxon>Campylobacterales</taxon>
        <taxon>Helicobacteraceae</taxon>
        <taxon>Helicobacter</taxon>
    </lineage>
</organism>
<feature type="chain" id="PRO_1000186200" description="Purine nucleoside phosphorylase DeoD-type">
    <location>
        <begin position="1"/>
        <end position="233"/>
    </location>
</feature>
<feature type="active site" description="Proton donor" evidence="2">
    <location>
        <position position="204"/>
    </location>
</feature>
<feature type="binding site" evidence="1">
    <location>
        <position position="4"/>
    </location>
    <ligand>
        <name>a purine D-ribonucleoside</name>
        <dbReference type="ChEBI" id="CHEBI:142355"/>
        <note>ligand shared between dimeric partners</note>
    </ligand>
</feature>
<feature type="binding site" description="in other chain" evidence="1">
    <location>
        <position position="20"/>
    </location>
    <ligand>
        <name>phosphate</name>
        <dbReference type="ChEBI" id="CHEBI:43474"/>
        <note>ligand shared between dimeric partners</note>
    </ligand>
</feature>
<feature type="binding site" description="in other chain" evidence="1">
    <location>
        <position position="24"/>
    </location>
    <ligand>
        <name>phosphate</name>
        <dbReference type="ChEBI" id="CHEBI:43474"/>
        <note>ligand shared between dimeric partners</note>
    </ligand>
</feature>
<feature type="binding site" evidence="1">
    <location>
        <position position="43"/>
    </location>
    <ligand>
        <name>phosphate</name>
        <dbReference type="ChEBI" id="CHEBI:43474"/>
        <note>ligand shared between dimeric partners</note>
    </ligand>
</feature>
<feature type="binding site" description="in other chain" evidence="1">
    <location>
        <begin position="87"/>
        <end position="90"/>
    </location>
    <ligand>
        <name>phosphate</name>
        <dbReference type="ChEBI" id="CHEBI:43474"/>
        <note>ligand shared between dimeric partners</note>
    </ligand>
</feature>
<feature type="binding site" description="in other chain" evidence="1">
    <location>
        <begin position="179"/>
        <end position="181"/>
    </location>
    <ligand>
        <name>a purine D-ribonucleoside</name>
        <dbReference type="ChEBI" id="CHEBI:142355"/>
        <note>ligand shared between dimeric partners</note>
    </ligand>
</feature>
<feature type="binding site" description="in other chain" evidence="1">
    <location>
        <begin position="203"/>
        <end position="204"/>
    </location>
    <ligand>
        <name>a purine D-ribonucleoside</name>
        <dbReference type="ChEBI" id="CHEBI:142355"/>
        <note>ligand shared between dimeric partners</note>
    </ligand>
</feature>
<feature type="site" description="Important for catalytic activity" evidence="2">
    <location>
        <position position="217"/>
    </location>
</feature>
<proteinExistence type="inferred from homology"/>
<keyword id="KW-0328">Glycosyltransferase</keyword>
<keyword id="KW-0808">Transferase</keyword>
<protein>
    <recommendedName>
        <fullName evidence="2">Purine nucleoside phosphorylase DeoD-type</fullName>
        <shortName evidence="2">PNP</shortName>
        <ecNumber evidence="2">2.4.2.1</ecNumber>
    </recommendedName>
</protein>
<evidence type="ECO:0000250" key="1">
    <source>
        <dbReference type="UniProtKB" id="P50389"/>
    </source>
</evidence>
<evidence type="ECO:0000255" key="2">
    <source>
        <dbReference type="HAMAP-Rule" id="MF_01627"/>
    </source>
</evidence>
<dbReference type="EC" id="2.4.2.1" evidence="2"/>
<dbReference type="EMBL" id="CP001217">
    <property type="protein sequence ID" value="ACJ08295.1"/>
    <property type="molecule type" value="Genomic_DNA"/>
</dbReference>
<dbReference type="SMR" id="B6JN17"/>
<dbReference type="KEGG" id="hpp:HPP12_1143"/>
<dbReference type="HOGENOM" id="CLU_068457_2_0_7"/>
<dbReference type="Proteomes" id="UP000008198">
    <property type="component" value="Chromosome"/>
</dbReference>
<dbReference type="GO" id="GO:0005829">
    <property type="term" value="C:cytosol"/>
    <property type="evidence" value="ECO:0007669"/>
    <property type="project" value="TreeGrafter"/>
</dbReference>
<dbReference type="GO" id="GO:0004731">
    <property type="term" value="F:purine-nucleoside phosphorylase activity"/>
    <property type="evidence" value="ECO:0007669"/>
    <property type="project" value="UniProtKB-EC"/>
</dbReference>
<dbReference type="GO" id="GO:0006152">
    <property type="term" value="P:purine nucleoside catabolic process"/>
    <property type="evidence" value="ECO:0007669"/>
    <property type="project" value="TreeGrafter"/>
</dbReference>
<dbReference type="CDD" id="cd09006">
    <property type="entry name" value="PNP_EcPNPI-like"/>
    <property type="match status" value="1"/>
</dbReference>
<dbReference type="Gene3D" id="3.40.50.1580">
    <property type="entry name" value="Nucleoside phosphorylase domain"/>
    <property type="match status" value="1"/>
</dbReference>
<dbReference type="HAMAP" id="MF_01627">
    <property type="entry name" value="Pur_nucleosid_phosp"/>
    <property type="match status" value="1"/>
</dbReference>
<dbReference type="InterPro" id="IPR004402">
    <property type="entry name" value="DeoD-type"/>
</dbReference>
<dbReference type="InterPro" id="IPR018016">
    <property type="entry name" value="Nucleoside_phosphorylase_CS"/>
</dbReference>
<dbReference type="InterPro" id="IPR000845">
    <property type="entry name" value="Nucleoside_phosphorylase_d"/>
</dbReference>
<dbReference type="InterPro" id="IPR035994">
    <property type="entry name" value="Nucleoside_phosphorylase_sf"/>
</dbReference>
<dbReference type="NCBIfam" id="TIGR00107">
    <property type="entry name" value="deoD"/>
    <property type="match status" value="1"/>
</dbReference>
<dbReference type="NCBIfam" id="NF004489">
    <property type="entry name" value="PRK05819.1"/>
    <property type="match status" value="1"/>
</dbReference>
<dbReference type="PANTHER" id="PTHR43691:SF11">
    <property type="entry name" value="FI09636P-RELATED"/>
    <property type="match status" value="1"/>
</dbReference>
<dbReference type="PANTHER" id="PTHR43691">
    <property type="entry name" value="URIDINE PHOSPHORYLASE"/>
    <property type="match status" value="1"/>
</dbReference>
<dbReference type="Pfam" id="PF01048">
    <property type="entry name" value="PNP_UDP_1"/>
    <property type="match status" value="1"/>
</dbReference>
<dbReference type="SUPFAM" id="SSF53167">
    <property type="entry name" value="Purine and uridine phosphorylases"/>
    <property type="match status" value="1"/>
</dbReference>
<dbReference type="PROSITE" id="PS01232">
    <property type="entry name" value="PNP_UDP_1"/>
    <property type="match status" value="1"/>
</dbReference>
<name>DEOD_HELP2</name>
<gene>
    <name evidence="2" type="primary">deoD</name>
    <name type="ordered locus">HPP12_1143</name>
</gene>
<comment type="function">
    <text evidence="2">Catalyzes the reversible phosphorolytic breakdown of the N-glycosidic bond in the beta-(deoxy)ribonucleoside molecules, with the formation of the corresponding free purine bases and pentose-1-phosphate.</text>
</comment>
<comment type="catalytic activity">
    <reaction evidence="2">
        <text>a purine D-ribonucleoside + phosphate = a purine nucleobase + alpha-D-ribose 1-phosphate</text>
        <dbReference type="Rhea" id="RHEA:19805"/>
        <dbReference type="ChEBI" id="CHEBI:26386"/>
        <dbReference type="ChEBI" id="CHEBI:43474"/>
        <dbReference type="ChEBI" id="CHEBI:57720"/>
        <dbReference type="ChEBI" id="CHEBI:142355"/>
        <dbReference type="EC" id="2.4.2.1"/>
    </reaction>
</comment>
<comment type="catalytic activity">
    <reaction evidence="2">
        <text>a purine 2'-deoxy-D-ribonucleoside + phosphate = a purine nucleobase + 2-deoxy-alpha-D-ribose 1-phosphate</text>
        <dbReference type="Rhea" id="RHEA:36431"/>
        <dbReference type="ChEBI" id="CHEBI:26386"/>
        <dbReference type="ChEBI" id="CHEBI:43474"/>
        <dbReference type="ChEBI" id="CHEBI:57259"/>
        <dbReference type="ChEBI" id="CHEBI:142361"/>
        <dbReference type="EC" id="2.4.2.1"/>
    </reaction>
</comment>
<comment type="subunit">
    <text evidence="2">Homohexamer; trimer of homodimers.</text>
</comment>
<comment type="similarity">
    <text evidence="2">Belongs to the PNP/UDP phosphorylase family.</text>
</comment>
<reference key="1">
    <citation type="submission" date="2008-10" db="EMBL/GenBank/DDBJ databases">
        <title>The complete genome sequence of Helicobacter pylori strain P12.</title>
        <authorList>
            <person name="Fischer W."/>
            <person name="Windhager L."/>
            <person name="Karnholz A."/>
            <person name="Zeiller M."/>
            <person name="Zimmer R."/>
            <person name="Haas R."/>
        </authorList>
    </citation>
    <scope>NUCLEOTIDE SEQUENCE [LARGE SCALE GENOMIC DNA]</scope>
    <source>
        <strain>P12</strain>
    </source>
</reference>
<accession>B6JN17</accession>
<sequence>MTPHINAKIGDFYPQCLLCGDPLRVSYIAKKFLQDAKEITNVRNMLGFSGKYKGKGISLMGHGMGIASCTIYVTELIKTYQVKELLRIGTCGAISPKVGLKDIIMATGASTDSKTNRVRFLNHDLSATPDFELSLRAYQTAKRLGIDLKVGNVFSSDFFYSFETHAFDLMAQYNHLAIEMEAAGLYATAMELNSKALCLCSVSDHLITKEALSPKERVESFDNMIILALEMMS</sequence>